<protein>
    <recommendedName>
        <fullName evidence="1">Anamorsin homolog</fullName>
    </recommendedName>
    <alternativeName>
        <fullName evidence="1">Fe-S cluster assembly protein DRE2 homolog</fullName>
    </alternativeName>
</protein>
<keyword id="KW-0001">2Fe-2S</keyword>
<keyword id="KW-0004">4Fe-4S</keyword>
<keyword id="KW-0963">Cytoplasm</keyword>
<keyword id="KW-0408">Iron</keyword>
<keyword id="KW-0411">Iron-sulfur</keyword>
<keyword id="KW-0479">Metal-binding</keyword>
<keyword id="KW-0496">Mitochondrion</keyword>
<keyword id="KW-1185">Reference proteome</keyword>
<proteinExistence type="evidence at protein level"/>
<reference key="1">
    <citation type="journal article" date="2000" name="Science">
        <title>The genome sequence of Drosophila melanogaster.</title>
        <authorList>
            <person name="Adams M.D."/>
            <person name="Celniker S.E."/>
            <person name="Holt R.A."/>
            <person name="Evans C.A."/>
            <person name="Gocayne J.D."/>
            <person name="Amanatides P.G."/>
            <person name="Scherer S.E."/>
            <person name="Li P.W."/>
            <person name="Hoskins R.A."/>
            <person name="Galle R.F."/>
            <person name="George R.A."/>
            <person name="Lewis S.E."/>
            <person name="Richards S."/>
            <person name="Ashburner M."/>
            <person name="Henderson S.N."/>
            <person name="Sutton G.G."/>
            <person name="Wortman J.R."/>
            <person name="Yandell M.D."/>
            <person name="Zhang Q."/>
            <person name="Chen L.X."/>
            <person name="Brandon R.C."/>
            <person name="Rogers Y.-H.C."/>
            <person name="Blazej R.G."/>
            <person name="Champe M."/>
            <person name="Pfeiffer B.D."/>
            <person name="Wan K.H."/>
            <person name="Doyle C."/>
            <person name="Baxter E.G."/>
            <person name="Helt G."/>
            <person name="Nelson C.R."/>
            <person name="Miklos G.L.G."/>
            <person name="Abril J.F."/>
            <person name="Agbayani A."/>
            <person name="An H.-J."/>
            <person name="Andrews-Pfannkoch C."/>
            <person name="Baldwin D."/>
            <person name="Ballew R.M."/>
            <person name="Basu A."/>
            <person name="Baxendale J."/>
            <person name="Bayraktaroglu L."/>
            <person name="Beasley E.M."/>
            <person name="Beeson K.Y."/>
            <person name="Benos P.V."/>
            <person name="Berman B.P."/>
            <person name="Bhandari D."/>
            <person name="Bolshakov S."/>
            <person name="Borkova D."/>
            <person name="Botchan M.R."/>
            <person name="Bouck J."/>
            <person name="Brokstein P."/>
            <person name="Brottier P."/>
            <person name="Burtis K.C."/>
            <person name="Busam D.A."/>
            <person name="Butler H."/>
            <person name="Cadieu E."/>
            <person name="Center A."/>
            <person name="Chandra I."/>
            <person name="Cherry J.M."/>
            <person name="Cawley S."/>
            <person name="Dahlke C."/>
            <person name="Davenport L.B."/>
            <person name="Davies P."/>
            <person name="de Pablos B."/>
            <person name="Delcher A."/>
            <person name="Deng Z."/>
            <person name="Mays A.D."/>
            <person name="Dew I."/>
            <person name="Dietz S.M."/>
            <person name="Dodson K."/>
            <person name="Doup L.E."/>
            <person name="Downes M."/>
            <person name="Dugan-Rocha S."/>
            <person name="Dunkov B.C."/>
            <person name="Dunn P."/>
            <person name="Durbin K.J."/>
            <person name="Evangelista C.C."/>
            <person name="Ferraz C."/>
            <person name="Ferriera S."/>
            <person name="Fleischmann W."/>
            <person name="Fosler C."/>
            <person name="Gabrielian A.E."/>
            <person name="Garg N.S."/>
            <person name="Gelbart W.M."/>
            <person name="Glasser K."/>
            <person name="Glodek A."/>
            <person name="Gong F."/>
            <person name="Gorrell J.H."/>
            <person name="Gu Z."/>
            <person name="Guan P."/>
            <person name="Harris M."/>
            <person name="Harris N.L."/>
            <person name="Harvey D.A."/>
            <person name="Heiman T.J."/>
            <person name="Hernandez J.R."/>
            <person name="Houck J."/>
            <person name="Hostin D."/>
            <person name="Houston K.A."/>
            <person name="Howland T.J."/>
            <person name="Wei M.-H."/>
            <person name="Ibegwam C."/>
            <person name="Jalali M."/>
            <person name="Kalush F."/>
            <person name="Karpen G.H."/>
            <person name="Ke Z."/>
            <person name="Kennison J.A."/>
            <person name="Ketchum K.A."/>
            <person name="Kimmel B.E."/>
            <person name="Kodira C.D."/>
            <person name="Kraft C.L."/>
            <person name="Kravitz S."/>
            <person name="Kulp D."/>
            <person name="Lai Z."/>
            <person name="Lasko P."/>
            <person name="Lei Y."/>
            <person name="Levitsky A.A."/>
            <person name="Li J.H."/>
            <person name="Li Z."/>
            <person name="Liang Y."/>
            <person name="Lin X."/>
            <person name="Liu X."/>
            <person name="Mattei B."/>
            <person name="McIntosh T.C."/>
            <person name="McLeod M.P."/>
            <person name="McPherson D."/>
            <person name="Merkulov G."/>
            <person name="Milshina N.V."/>
            <person name="Mobarry C."/>
            <person name="Morris J."/>
            <person name="Moshrefi A."/>
            <person name="Mount S.M."/>
            <person name="Moy M."/>
            <person name="Murphy B."/>
            <person name="Murphy L."/>
            <person name="Muzny D.M."/>
            <person name="Nelson D.L."/>
            <person name="Nelson D.R."/>
            <person name="Nelson K.A."/>
            <person name="Nixon K."/>
            <person name="Nusskern D.R."/>
            <person name="Pacleb J.M."/>
            <person name="Palazzolo M."/>
            <person name="Pittman G.S."/>
            <person name="Pan S."/>
            <person name="Pollard J."/>
            <person name="Puri V."/>
            <person name="Reese M.G."/>
            <person name="Reinert K."/>
            <person name="Remington K."/>
            <person name="Saunders R.D.C."/>
            <person name="Scheeler F."/>
            <person name="Shen H."/>
            <person name="Shue B.C."/>
            <person name="Siden-Kiamos I."/>
            <person name="Simpson M."/>
            <person name="Skupski M.P."/>
            <person name="Smith T.J."/>
            <person name="Spier E."/>
            <person name="Spradling A.C."/>
            <person name="Stapleton M."/>
            <person name="Strong R."/>
            <person name="Sun E."/>
            <person name="Svirskas R."/>
            <person name="Tector C."/>
            <person name="Turner R."/>
            <person name="Venter E."/>
            <person name="Wang A.H."/>
            <person name="Wang X."/>
            <person name="Wang Z.-Y."/>
            <person name="Wassarman D.A."/>
            <person name="Weinstock G.M."/>
            <person name="Weissenbach J."/>
            <person name="Williams S.M."/>
            <person name="Woodage T."/>
            <person name="Worley K.C."/>
            <person name="Wu D."/>
            <person name="Yang S."/>
            <person name="Yao Q.A."/>
            <person name="Ye J."/>
            <person name="Yeh R.-F."/>
            <person name="Zaveri J.S."/>
            <person name="Zhan M."/>
            <person name="Zhang G."/>
            <person name="Zhao Q."/>
            <person name="Zheng L."/>
            <person name="Zheng X.H."/>
            <person name="Zhong F.N."/>
            <person name="Zhong W."/>
            <person name="Zhou X."/>
            <person name="Zhu S.C."/>
            <person name="Zhu X."/>
            <person name="Smith H.O."/>
            <person name="Gibbs R.A."/>
            <person name="Myers E.W."/>
            <person name="Rubin G.M."/>
            <person name="Venter J.C."/>
        </authorList>
    </citation>
    <scope>NUCLEOTIDE SEQUENCE [LARGE SCALE GENOMIC DNA]</scope>
    <source>
        <strain>Berkeley</strain>
    </source>
</reference>
<reference key="2">
    <citation type="journal article" date="2002" name="Genome Biol.">
        <title>Annotation of the Drosophila melanogaster euchromatic genome: a systematic review.</title>
        <authorList>
            <person name="Misra S."/>
            <person name="Crosby M.A."/>
            <person name="Mungall C.J."/>
            <person name="Matthews B.B."/>
            <person name="Campbell K.S."/>
            <person name="Hradecky P."/>
            <person name="Huang Y."/>
            <person name="Kaminker J.S."/>
            <person name="Millburn G.H."/>
            <person name="Prochnik S.E."/>
            <person name="Smith C.D."/>
            <person name="Tupy J.L."/>
            <person name="Whitfield E.J."/>
            <person name="Bayraktaroglu L."/>
            <person name="Berman B.P."/>
            <person name="Bettencourt B.R."/>
            <person name="Celniker S.E."/>
            <person name="de Grey A.D.N.J."/>
            <person name="Drysdale R.A."/>
            <person name="Harris N.L."/>
            <person name="Richter J."/>
            <person name="Russo S."/>
            <person name="Schroeder A.J."/>
            <person name="Shu S.Q."/>
            <person name="Stapleton M."/>
            <person name="Yamada C."/>
            <person name="Ashburner M."/>
            <person name="Gelbart W.M."/>
            <person name="Rubin G.M."/>
            <person name="Lewis S.E."/>
        </authorList>
    </citation>
    <scope>GENOME REANNOTATION</scope>
    <source>
        <strain>Berkeley</strain>
    </source>
</reference>
<reference key="3">
    <citation type="journal article" date="2002" name="Genome Biol.">
        <title>A Drosophila full-length cDNA resource.</title>
        <authorList>
            <person name="Stapleton M."/>
            <person name="Carlson J.W."/>
            <person name="Brokstein P."/>
            <person name="Yu C."/>
            <person name="Champe M."/>
            <person name="George R.A."/>
            <person name="Guarin H."/>
            <person name="Kronmiller B."/>
            <person name="Pacleb J.M."/>
            <person name="Park S."/>
            <person name="Wan K.H."/>
            <person name="Rubin G.M."/>
            <person name="Celniker S.E."/>
        </authorList>
    </citation>
    <scope>NUCLEOTIDE SEQUENCE [LARGE SCALE MRNA]</scope>
    <source>
        <strain>Berkeley</strain>
        <tissue>Embryo</tissue>
    </source>
</reference>
<gene>
    <name evidence="1" type="primary">CIAPIN1</name>
    <name evidence="1" type="synonym">l(2)35Bg</name>
    <name type="ORF">CG4180</name>
</gene>
<dbReference type="EMBL" id="AE014134">
    <property type="protein sequence ID" value="AAF53433.1"/>
    <property type="molecule type" value="Genomic_DNA"/>
</dbReference>
<dbReference type="EMBL" id="AY060402">
    <property type="protein sequence ID" value="AAL25441.1"/>
    <property type="molecule type" value="mRNA"/>
</dbReference>
<dbReference type="RefSeq" id="NP_524938.1">
    <property type="nucleotide sequence ID" value="NM_080199.3"/>
</dbReference>
<dbReference type="BioGRID" id="72253">
    <property type="interactions" value="6"/>
</dbReference>
<dbReference type="FunCoup" id="Q9V3Y2">
    <property type="interactions" value="2219"/>
</dbReference>
<dbReference type="IntAct" id="Q9V3Y2">
    <property type="interactions" value="3"/>
</dbReference>
<dbReference type="STRING" id="7227.FBpp0080284"/>
<dbReference type="PaxDb" id="7227-FBpp0080284"/>
<dbReference type="DNASU" id="49424"/>
<dbReference type="EnsemblMetazoa" id="FBtr0080725">
    <property type="protein sequence ID" value="FBpp0080284"/>
    <property type="gene ID" value="FBgn0001977"/>
</dbReference>
<dbReference type="GeneID" id="49424"/>
<dbReference type="KEGG" id="dme:Dmel_CG4180"/>
<dbReference type="UCSC" id="CG4180-RA">
    <property type="organism name" value="d. melanogaster"/>
</dbReference>
<dbReference type="AGR" id="FB:FBgn0001977"/>
<dbReference type="CTD" id="57019"/>
<dbReference type="FlyBase" id="FBgn0001977">
    <property type="gene designation" value="CIAPIN1"/>
</dbReference>
<dbReference type="VEuPathDB" id="VectorBase:FBgn0001977"/>
<dbReference type="eggNOG" id="KOG4020">
    <property type="taxonomic scope" value="Eukaryota"/>
</dbReference>
<dbReference type="GeneTree" id="ENSGT00390000011417"/>
<dbReference type="HOGENOM" id="CLU_064393_1_0_1"/>
<dbReference type="InParanoid" id="Q9V3Y2"/>
<dbReference type="OMA" id="GFINCRE"/>
<dbReference type="OrthoDB" id="311633at2759"/>
<dbReference type="PhylomeDB" id="Q9V3Y2"/>
<dbReference type="BioGRID-ORCS" id="49424">
    <property type="hits" value="0 hits in 1 CRISPR screen"/>
</dbReference>
<dbReference type="GenomeRNAi" id="49424"/>
<dbReference type="PRO" id="PR:Q9V3Y2"/>
<dbReference type="Proteomes" id="UP000000803">
    <property type="component" value="Chromosome 2L"/>
</dbReference>
<dbReference type="Bgee" id="FBgn0001977">
    <property type="expression patterns" value="Expressed in spermatocyte in testis and 131 other cell types or tissues"/>
</dbReference>
<dbReference type="GO" id="GO:0005737">
    <property type="term" value="C:cytoplasm"/>
    <property type="evidence" value="ECO:0000318"/>
    <property type="project" value="GO_Central"/>
</dbReference>
<dbReference type="GO" id="GO:0005829">
    <property type="term" value="C:cytosol"/>
    <property type="evidence" value="ECO:0000250"/>
    <property type="project" value="FlyBase"/>
</dbReference>
<dbReference type="GO" id="GO:0005758">
    <property type="term" value="C:mitochondrial intermembrane space"/>
    <property type="evidence" value="ECO:0007669"/>
    <property type="project" value="UniProtKB-SubCell"/>
</dbReference>
<dbReference type="GO" id="GO:0051537">
    <property type="term" value="F:2 iron, 2 sulfur cluster binding"/>
    <property type="evidence" value="ECO:0007669"/>
    <property type="project" value="UniProtKB-UniRule"/>
</dbReference>
<dbReference type="GO" id="GO:0051539">
    <property type="term" value="F:4 iron, 4 sulfur cluster binding"/>
    <property type="evidence" value="ECO:0007669"/>
    <property type="project" value="UniProtKB-KW"/>
</dbReference>
<dbReference type="GO" id="GO:0009055">
    <property type="term" value="F:electron transfer activity"/>
    <property type="evidence" value="ECO:0000250"/>
    <property type="project" value="FlyBase"/>
</dbReference>
<dbReference type="GO" id="GO:0046872">
    <property type="term" value="F:metal ion binding"/>
    <property type="evidence" value="ECO:0007669"/>
    <property type="project" value="UniProtKB-KW"/>
</dbReference>
<dbReference type="GO" id="GO:0016226">
    <property type="term" value="P:iron-sulfur cluster assembly"/>
    <property type="evidence" value="ECO:0000318"/>
    <property type="project" value="GO_Central"/>
</dbReference>
<dbReference type="GO" id="GO:0043066">
    <property type="term" value="P:negative regulation of apoptotic process"/>
    <property type="evidence" value="ECO:0000250"/>
    <property type="project" value="FlyBase"/>
</dbReference>
<dbReference type="FunFam" id="3.40.50.150:FF:000545">
    <property type="entry name" value="Anamorsin homolog"/>
    <property type="match status" value="1"/>
</dbReference>
<dbReference type="Gene3D" id="3.40.50.150">
    <property type="entry name" value="Vaccinia Virus protein VP39"/>
    <property type="match status" value="1"/>
</dbReference>
<dbReference type="HAMAP" id="MF_03115">
    <property type="entry name" value="Anamorsin"/>
    <property type="match status" value="1"/>
</dbReference>
<dbReference type="InterPro" id="IPR007785">
    <property type="entry name" value="Anamorsin"/>
</dbReference>
<dbReference type="InterPro" id="IPR049011">
    <property type="entry name" value="Anamorsin_N_metazoan"/>
</dbReference>
<dbReference type="InterPro" id="IPR046408">
    <property type="entry name" value="CIAPIN1"/>
</dbReference>
<dbReference type="InterPro" id="IPR029063">
    <property type="entry name" value="SAM-dependent_MTases_sf"/>
</dbReference>
<dbReference type="PANTHER" id="PTHR13273">
    <property type="entry name" value="ANAMORSIN"/>
    <property type="match status" value="1"/>
</dbReference>
<dbReference type="PANTHER" id="PTHR13273:SF14">
    <property type="entry name" value="ANAMORSIN"/>
    <property type="match status" value="1"/>
</dbReference>
<dbReference type="Pfam" id="PF20922">
    <property type="entry name" value="Anamorsin_N"/>
    <property type="match status" value="1"/>
</dbReference>
<dbReference type="Pfam" id="PF05093">
    <property type="entry name" value="CIAPIN1"/>
    <property type="match status" value="2"/>
</dbReference>
<evidence type="ECO:0000255" key="1">
    <source>
        <dbReference type="HAMAP-Rule" id="MF_03115"/>
    </source>
</evidence>
<organism>
    <name type="scientific">Drosophila melanogaster</name>
    <name type="common">Fruit fly</name>
    <dbReference type="NCBI Taxonomy" id="7227"/>
    <lineage>
        <taxon>Eukaryota</taxon>
        <taxon>Metazoa</taxon>
        <taxon>Ecdysozoa</taxon>
        <taxon>Arthropoda</taxon>
        <taxon>Hexapoda</taxon>
        <taxon>Insecta</taxon>
        <taxon>Pterygota</taxon>
        <taxon>Neoptera</taxon>
        <taxon>Endopterygota</taxon>
        <taxon>Diptera</taxon>
        <taxon>Brachycera</taxon>
        <taxon>Muscomorpha</taxon>
        <taxon>Ephydroidea</taxon>
        <taxon>Drosophilidae</taxon>
        <taxon>Drosophila</taxon>
        <taxon>Sophophora</taxon>
    </lineage>
</organism>
<sequence>MENFKGLQKSLYIWTDSADLDKRVEQLKAATGGDVALENVHRLSFSSYANSSFDLIVIECAQLTDSYVKLLHMLKPSGKLHLVSYIGPAASLLQEIKLSGFINCREDSPDALTAEKPGYETGSSARLSFAKKNASAVNVWKISGDDEELIDEEELLDEEDKQKPDPAGLRVCSTTGKRKACKNCSCGLAEELETEKQSQKATENAKSSCGNCYLGDAFRCSTCPYLGMPAFKPGEKVQLADNLLKSDI</sequence>
<feature type="chain" id="PRO_0000392317" description="Anamorsin homolog">
    <location>
        <begin position="1"/>
        <end position="248"/>
    </location>
</feature>
<feature type="region of interest" description="N-terminal SAM-like domain" evidence="1">
    <location>
        <begin position="4"/>
        <end position="129"/>
    </location>
</feature>
<feature type="region of interest" description="Linker" evidence="1">
    <location>
        <begin position="130"/>
        <end position="161"/>
    </location>
</feature>
<feature type="region of interest" description="Fe-S binding site A" evidence="1">
    <location>
        <begin position="172"/>
        <end position="186"/>
    </location>
</feature>
<feature type="region of interest" description="Fe-S binding site B" evidence="1">
    <location>
        <begin position="209"/>
        <end position="223"/>
    </location>
</feature>
<feature type="short sequence motif" description="Cx2C motif 1" evidence="1">
    <location>
        <begin position="209"/>
        <end position="212"/>
    </location>
</feature>
<feature type="short sequence motif" description="Cx2C motif 2" evidence="1">
    <location>
        <begin position="220"/>
        <end position="223"/>
    </location>
</feature>
<feature type="binding site" evidence="1">
    <location>
        <position position="172"/>
    </location>
    <ligand>
        <name>[2Fe-2S] cluster</name>
        <dbReference type="ChEBI" id="CHEBI:190135"/>
    </ligand>
</feature>
<feature type="binding site" evidence="1">
    <location>
        <position position="181"/>
    </location>
    <ligand>
        <name>[2Fe-2S] cluster</name>
        <dbReference type="ChEBI" id="CHEBI:190135"/>
    </ligand>
</feature>
<feature type="binding site" evidence="1">
    <location>
        <position position="184"/>
    </location>
    <ligand>
        <name>[2Fe-2S] cluster</name>
        <dbReference type="ChEBI" id="CHEBI:190135"/>
    </ligand>
</feature>
<feature type="binding site" evidence="1">
    <location>
        <position position="186"/>
    </location>
    <ligand>
        <name>[2Fe-2S] cluster</name>
        <dbReference type="ChEBI" id="CHEBI:190135"/>
    </ligand>
</feature>
<feature type="binding site" evidence="1">
    <location>
        <position position="209"/>
    </location>
    <ligand>
        <name>[4Fe-4S] cluster</name>
        <dbReference type="ChEBI" id="CHEBI:49883"/>
    </ligand>
</feature>
<feature type="binding site" evidence="1">
    <location>
        <position position="212"/>
    </location>
    <ligand>
        <name>[4Fe-4S] cluster</name>
        <dbReference type="ChEBI" id="CHEBI:49883"/>
    </ligand>
</feature>
<feature type="binding site" evidence="1">
    <location>
        <position position="220"/>
    </location>
    <ligand>
        <name>[4Fe-4S] cluster</name>
        <dbReference type="ChEBI" id="CHEBI:49883"/>
    </ligand>
</feature>
<feature type="binding site" evidence="1">
    <location>
        <position position="223"/>
    </location>
    <ligand>
        <name>[4Fe-4S] cluster</name>
        <dbReference type="ChEBI" id="CHEBI:49883"/>
    </ligand>
</feature>
<comment type="function">
    <text evidence="1">Component of the cytosolic iron-sulfur (Fe-S) protein assembly (CIA) machinery. Required for the maturation of extramitochondrial Fe-S proteins. Part of an electron transfer chain functioning in an early step of cytosolic Fe-S biogenesis, facilitating the de novo assembly of a [4Fe-4S] cluster on the cytosolic Fe-S scaffold complex. Electrons are transferred from NADPH via a FAD- and FMN-containing diflavin oxidoreductase. Together with the diflavin oxidoreductase, also required for the assembly of the diferric tyrosyl radical cofactor of ribonucleotide reductase (RNR), probably by providing electrons for reduction during radical cofactor maturation in the catalytic small subunit.</text>
</comment>
<comment type="cofactor">
    <cofactor evidence="1">
        <name>[2Fe-2S] cluster</name>
        <dbReference type="ChEBI" id="CHEBI:190135"/>
    </cofactor>
</comment>
<comment type="cofactor">
    <cofactor evidence="1">
        <name>[4Fe-4S] cluster</name>
        <dbReference type="ChEBI" id="CHEBI:49883"/>
    </cofactor>
</comment>
<comment type="subunit">
    <text evidence="1">Monomer.</text>
</comment>
<comment type="interaction">
    <interactant intactId="EBI-186595">
        <id>Q9V3Y2</id>
    </interactant>
    <interactant intactId="EBI-191805">
        <id>Q9VJZ6</id>
        <label>Grx3</label>
    </interactant>
    <organismsDiffer>false</organismsDiffer>
    <experiments>5</experiments>
</comment>
<comment type="subcellular location">
    <subcellularLocation>
        <location evidence="1">Cytoplasm</location>
    </subcellularLocation>
    <subcellularLocation>
        <location evidence="1">Mitochondrion intermembrane space</location>
    </subcellularLocation>
</comment>
<comment type="domain">
    <text evidence="1">The C-terminal domain binds 2 Fe-S clusters but is otherwise mostly in an intrinsically disordered conformation.</text>
</comment>
<comment type="domain">
    <text evidence="1">The N-terminal domain has structural similarity with S-adenosyl-L-methionine-dependent methyltransferases, but does not bind S-adenosyl-L-methionine. It is required for correct assembly of the 2 Fe-S clusters.</text>
</comment>
<comment type="domain">
    <text evidence="1">The twin Cx2C motifs are involved in the recognition by the mitochondrial MIA40-ERV1 disulfide relay system. The formation of 2 disulfide bonds in the Cx2C motifs through dithiol/disulfide exchange reactions effectively traps the protein in the mitochondrial intermembrane space.</text>
</comment>
<comment type="similarity">
    <text evidence="1">Belongs to the anamorsin family.</text>
</comment>
<name>DRE2_DROME</name>
<accession>Q9V3Y2</accession>